<gene>
    <name evidence="1" type="primary">coaE</name>
    <name type="ordered locus">DP2729</name>
</gene>
<proteinExistence type="inferred from homology"/>
<name>COAE_DESPS</name>
<organism>
    <name type="scientific">Desulfotalea psychrophila (strain LSv54 / DSM 12343)</name>
    <dbReference type="NCBI Taxonomy" id="177439"/>
    <lineage>
        <taxon>Bacteria</taxon>
        <taxon>Pseudomonadati</taxon>
        <taxon>Thermodesulfobacteriota</taxon>
        <taxon>Desulfobulbia</taxon>
        <taxon>Desulfobulbales</taxon>
        <taxon>Desulfocapsaceae</taxon>
        <taxon>Desulfotalea</taxon>
    </lineage>
</organism>
<feature type="chain" id="PRO_0000243282" description="Dephospho-CoA kinase">
    <location>
        <begin position="1"/>
        <end position="199"/>
    </location>
</feature>
<feature type="domain" description="DPCK" evidence="1">
    <location>
        <begin position="2"/>
        <end position="199"/>
    </location>
</feature>
<feature type="binding site" evidence="1">
    <location>
        <begin position="10"/>
        <end position="15"/>
    </location>
    <ligand>
        <name>ATP</name>
        <dbReference type="ChEBI" id="CHEBI:30616"/>
    </ligand>
</feature>
<sequence>MKIAVTGGYSSGKSSVSAVLTTLLDCFFISADIACKNELQVGATGWQQLKELWGPDYFSEDGEVDREAVREKIFLDPASKKELEAILHPLAHRQIVDAGLRADVCDKHLVAEIPLLFESDQSYDFDMVIVVSVAEDIAISRAMRRDDVRASLATSIIASQLPLAIKEARADFIINNDGLFAATYSQILFFVADRIEKKK</sequence>
<protein>
    <recommendedName>
        <fullName evidence="1">Dephospho-CoA kinase</fullName>
        <ecNumber evidence="1">2.7.1.24</ecNumber>
    </recommendedName>
    <alternativeName>
        <fullName evidence="1">Dephosphocoenzyme A kinase</fullName>
    </alternativeName>
</protein>
<evidence type="ECO:0000255" key="1">
    <source>
        <dbReference type="HAMAP-Rule" id="MF_00376"/>
    </source>
</evidence>
<keyword id="KW-0067">ATP-binding</keyword>
<keyword id="KW-0173">Coenzyme A biosynthesis</keyword>
<keyword id="KW-0963">Cytoplasm</keyword>
<keyword id="KW-0418">Kinase</keyword>
<keyword id="KW-0547">Nucleotide-binding</keyword>
<keyword id="KW-1185">Reference proteome</keyword>
<keyword id="KW-0808">Transferase</keyword>
<comment type="function">
    <text evidence="1">Catalyzes the phosphorylation of the 3'-hydroxyl group of dephosphocoenzyme A to form coenzyme A.</text>
</comment>
<comment type="catalytic activity">
    <reaction evidence="1">
        <text>3'-dephospho-CoA + ATP = ADP + CoA + H(+)</text>
        <dbReference type="Rhea" id="RHEA:18245"/>
        <dbReference type="ChEBI" id="CHEBI:15378"/>
        <dbReference type="ChEBI" id="CHEBI:30616"/>
        <dbReference type="ChEBI" id="CHEBI:57287"/>
        <dbReference type="ChEBI" id="CHEBI:57328"/>
        <dbReference type="ChEBI" id="CHEBI:456216"/>
        <dbReference type="EC" id="2.7.1.24"/>
    </reaction>
</comment>
<comment type="pathway">
    <text evidence="1">Cofactor biosynthesis; coenzyme A biosynthesis; CoA from (R)-pantothenate: step 5/5.</text>
</comment>
<comment type="subcellular location">
    <subcellularLocation>
        <location evidence="1">Cytoplasm</location>
    </subcellularLocation>
</comment>
<comment type="similarity">
    <text evidence="1">Belongs to the CoaE family.</text>
</comment>
<dbReference type="EC" id="2.7.1.24" evidence="1"/>
<dbReference type="EMBL" id="CR522870">
    <property type="protein sequence ID" value="CAG37458.1"/>
    <property type="molecule type" value="Genomic_DNA"/>
</dbReference>
<dbReference type="RefSeq" id="WP_011189970.1">
    <property type="nucleotide sequence ID" value="NC_006138.1"/>
</dbReference>
<dbReference type="SMR" id="Q6AJM2"/>
<dbReference type="STRING" id="177439.DP2729"/>
<dbReference type="KEGG" id="dps:DP2729"/>
<dbReference type="eggNOG" id="COG0237">
    <property type="taxonomic scope" value="Bacteria"/>
</dbReference>
<dbReference type="HOGENOM" id="CLU_057180_1_2_7"/>
<dbReference type="OrthoDB" id="9812943at2"/>
<dbReference type="UniPathway" id="UPA00241">
    <property type="reaction ID" value="UER00356"/>
</dbReference>
<dbReference type="Proteomes" id="UP000000602">
    <property type="component" value="Chromosome"/>
</dbReference>
<dbReference type="GO" id="GO:0005737">
    <property type="term" value="C:cytoplasm"/>
    <property type="evidence" value="ECO:0007669"/>
    <property type="project" value="UniProtKB-SubCell"/>
</dbReference>
<dbReference type="GO" id="GO:0005524">
    <property type="term" value="F:ATP binding"/>
    <property type="evidence" value="ECO:0007669"/>
    <property type="project" value="UniProtKB-UniRule"/>
</dbReference>
<dbReference type="GO" id="GO:0004140">
    <property type="term" value="F:dephospho-CoA kinase activity"/>
    <property type="evidence" value="ECO:0007669"/>
    <property type="project" value="UniProtKB-UniRule"/>
</dbReference>
<dbReference type="GO" id="GO:0015937">
    <property type="term" value="P:coenzyme A biosynthetic process"/>
    <property type="evidence" value="ECO:0007669"/>
    <property type="project" value="UniProtKB-UniRule"/>
</dbReference>
<dbReference type="CDD" id="cd02022">
    <property type="entry name" value="DPCK"/>
    <property type="match status" value="1"/>
</dbReference>
<dbReference type="Gene3D" id="3.40.50.300">
    <property type="entry name" value="P-loop containing nucleotide triphosphate hydrolases"/>
    <property type="match status" value="1"/>
</dbReference>
<dbReference type="HAMAP" id="MF_00376">
    <property type="entry name" value="Dephospho_CoA_kinase"/>
    <property type="match status" value="1"/>
</dbReference>
<dbReference type="InterPro" id="IPR001977">
    <property type="entry name" value="Depp_CoAkinase"/>
</dbReference>
<dbReference type="InterPro" id="IPR027417">
    <property type="entry name" value="P-loop_NTPase"/>
</dbReference>
<dbReference type="NCBIfam" id="TIGR00152">
    <property type="entry name" value="dephospho-CoA kinase"/>
    <property type="match status" value="1"/>
</dbReference>
<dbReference type="PANTHER" id="PTHR10695:SF46">
    <property type="entry name" value="BIFUNCTIONAL COENZYME A SYNTHASE-RELATED"/>
    <property type="match status" value="1"/>
</dbReference>
<dbReference type="PANTHER" id="PTHR10695">
    <property type="entry name" value="DEPHOSPHO-COA KINASE-RELATED"/>
    <property type="match status" value="1"/>
</dbReference>
<dbReference type="Pfam" id="PF01121">
    <property type="entry name" value="CoaE"/>
    <property type="match status" value="1"/>
</dbReference>
<dbReference type="SUPFAM" id="SSF52540">
    <property type="entry name" value="P-loop containing nucleoside triphosphate hydrolases"/>
    <property type="match status" value="1"/>
</dbReference>
<dbReference type="PROSITE" id="PS51219">
    <property type="entry name" value="DPCK"/>
    <property type="match status" value="1"/>
</dbReference>
<reference key="1">
    <citation type="journal article" date="2004" name="Environ. Microbiol.">
        <title>The genome of Desulfotalea psychrophila, a sulfate-reducing bacterium from permanently cold Arctic sediments.</title>
        <authorList>
            <person name="Rabus R."/>
            <person name="Ruepp A."/>
            <person name="Frickey T."/>
            <person name="Rattei T."/>
            <person name="Fartmann B."/>
            <person name="Stark M."/>
            <person name="Bauer M."/>
            <person name="Zibat A."/>
            <person name="Lombardot T."/>
            <person name="Becker I."/>
            <person name="Amann J."/>
            <person name="Gellner K."/>
            <person name="Teeling H."/>
            <person name="Leuschner W.D."/>
            <person name="Gloeckner F.-O."/>
            <person name="Lupas A.N."/>
            <person name="Amann R."/>
            <person name="Klenk H.-P."/>
        </authorList>
    </citation>
    <scope>NUCLEOTIDE SEQUENCE [LARGE SCALE GENOMIC DNA]</scope>
    <source>
        <strain>DSM 12343 / LSv54</strain>
    </source>
</reference>
<accession>Q6AJM2</accession>